<sequence>MAKKSMKNRELKRQLTVAKFAKKRAELKATIVNLNASPEERFAAVVALQKQPRDASASRLRNRCRLTGRPHGVYRKFGLGRNMLRQAAMRGDVPGLVKASW</sequence>
<dbReference type="EMBL" id="AE015451">
    <property type="protein sequence ID" value="AAN66097.1"/>
    <property type="molecule type" value="Genomic_DNA"/>
</dbReference>
<dbReference type="RefSeq" id="NP_742633.1">
    <property type="nucleotide sequence ID" value="NC_002947.4"/>
</dbReference>
<dbReference type="RefSeq" id="WP_003255472.1">
    <property type="nucleotide sequence ID" value="NZ_CP169744.1"/>
</dbReference>
<dbReference type="SMR" id="Q88QM2"/>
<dbReference type="STRING" id="160488.PP_0467"/>
<dbReference type="PaxDb" id="160488-PP_0467"/>
<dbReference type="GeneID" id="83677765"/>
<dbReference type="KEGG" id="ppu:PP_0467"/>
<dbReference type="PATRIC" id="fig|160488.4.peg.499"/>
<dbReference type="eggNOG" id="COG0199">
    <property type="taxonomic scope" value="Bacteria"/>
</dbReference>
<dbReference type="HOGENOM" id="CLU_139869_0_1_6"/>
<dbReference type="OrthoDB" id="9810484at2"/>
<dbReference type="PhylomeDB" id="Q88QM2"/>
<dbReference type="BioCyc" id="PPUT160488:G1G01-513-MONOMER"/>
<dbReference type="Proteomes" id="UP000000556">
    <property type="component" value="Chromosome"/>
</dbReference>
<dbReference type="GO" id="GO:0005737">
    <property type="term" value="C:cytoplasm"/>
    <property type="evidence" value="ECO:0007669"/>
    <property type="project" value="UniProtKB-ARBA"/>
</dbReference>
<dbReference type="GO" id="GO:0015935">
    <property type="term" value="C:small ribosomal subunit"/>
    <property type="evidence" value="ECO:0007669"/>
    <property type="project" value="TreeGrafter"/>
</dbReference>
<dbReference type="GO" id="GO:0019843">
    <property type="term" value="F:rRNA binding"/>
    <property type="evidence" value="ECO:0007669"/>
    <property type="project" value="UniProtKB-UniRule"/>
</dbReference>
<dbReference type="GO" id="GO:0003735">
    <property type="term" value="F:structural constituent of ribosome"/>
    <property type="evidence" value="ECO:0007669"/>
    <property type="project" value="InterPro"/>
</dbReference>
<dbReference type="GO" id="GO:0006412">
    <property type="term" value="P:translation"/>
    <property type="evidence" value="ECO:0007669"/>
    <property type="project" value="UniProtKB-UniRule"/>
</dbReference>
<dbReference type="FunFam" id="1.10.287.1480:FF:000001">
    <property type="entry name" value="30S ribosomal protein S14"/>
    <property type="match status" value="1"/>
</dbReference>
<dbReference type="Gene3D" id="1.10.287.1480">
    <property type="match status" value="1"/>
</dbReference>
<dbReference type="HAMAP" id="MF_00537">
    <property type="entry name" value="Ribosomal_uS14_1"/>
    <property type="match status" value="1"/>
</dbReference>
<dbReference type="InterPro" id="IPR001209">
    <property type="entry name" value="Ribosomal_uS14"/>
</dbReference>
<dbReference type="InterPro" id="IPR023036">
    <property type="entry name" value="Ribosomal_uS14_bac/plastid"/>
</dbReference>
<dbReference type="NCBIfam" id="NF006477">
    <property type="entry name" value="PRK08881.1"/>
    <property type="match status" value="1"/>
</dbReference>
<dbReference type="PANTHER" id="PTHR19836">
    <property type="entry name" value="30S RIBOSOMAL PROTEIN S14"/>
    <property type="match status" value="1"/>
</dbReference>
<dbReference type="PANTHER" id="PTHR19836:SF19">
    <property type="entry name" value="SMALL RIBOSOMAL SUBUNIT PROTEIN US14M"/>
    <property type="match status" value="1"/>
</dbReference>
<dbReference type="Pfam" id="PF00253">
    <property type="entry name" value="Ribosomal_S14"/>
    <property type="match status" value="1"/>
</dbReference>
<dbReference type="SUPFAM" id="SSF57716">
    <property type="entry name" value="Glucocorticoid receptor-like (DNA-binding domain)"/>
    <property type="match status" value="1"/>
</dbReference>
<keyword id="KW-1185">Reference proteome</keyword>
<keyword id="KW-0687">Ribonucleoprotein</keyword>
<keyword id="KW-0689">Ribosomal protein</keyword>
<keyword id="KW-0694">RNA-binding</keyword>
<keyword id="KW-0699">rRNA-binding</keyword>
<reference key="1">
    <citation type="journal article" date="2002" name="Environ. Microbiol.">
        <title>Complete genome sequence and comparative analysis of the metabolically versatile Pseudomonas putida KT2440.</title>
        <authorList>
            <person name="Nelson K.E."/>
            <person name="Weinel C."/>
            <person name="Paulsen I.T."/>
            <person name="Dodson R.J."/>
            <person name="Hilbert H."/>
            <person name="Martins dos Santos V.A.P."/>
            <person name="Fouts D.E."/>
            <person name="Gill S.R."/>
            <person name="Pop M."/>
            <person name="Holmes M."/>
            <person name="Brinkac L.M."/>
            <person name="Beanan M.J."/>
            <person name="DeBoy R.T."/>
            <person name="Daugherty S.C."/>
            <person name="Kolonay J.F."/>
            <person name="Madupu R."/>
            <person name="Nelson W.C."/>
            <person name="White O."/>
            <person name="Peterson J.D."/>
            <person name="Khouri H.M."/>
            <person name="Hance I."/>
            <person name="Chris Lee P."/>
            <person name="Holtzapple E.K."/>
            <person name="Scanlan D."/>
            <person name="Tran K."/>
            <person name="Moazzez A."/>
            <person name="Utterback T.R."/>
            <person name="Rizzo M."/>
            <person name="Lee K."/>
            <person name="Kosack D."/>
            <person name="Moestl D."/>
            <person name="Wedler H."/>
            <person name="Lauber J."/>
            <person name="Stjepandic D."/>
            <person name="Hoheisel J."/>
            <person name="Straetz M."/>
            <person name="Heim S."/>
            <person name="Kiewitz C."/>
            <person name="Eisen J.A."/>
            <person name="Timmis K.N."/>
            <person name="Duesterhoeft A."/>
            <person name="Tuemmler B."/>
            <person name="Fraser C.M."/>
        </authorList>
    </citation>
    <scope>NUCLEOTIDE SEQUENCE [LARGE SCALE GENOMIC DNA]</scope>
    <source>
        <strain>ATCC 47054 / DSM 6125 / CFBP 8728 / NCIMB 11950 / KT2440</strain>
    </source>
</reference>
<evidence type="ECO:0000255" key="1">
    <source>
        <dbReference type="HAMAP-Rule" id="MF_00537"/>
    </source>
</evidence>
<evidence type="ECO:0000305" key="2"/>
<name>RS14_PSEPK</name>
<organism>
    <name type="scientific">Pseudomonas putida (strain ATCC 47054 / DSM 6125 / CFBP 8728 / NCIMB 11950 / KT2440)</name>
    <dbReference type="NCBI Taxonomy" id="160488"/>
    <lineage>
        <taxon>Bacteria</taxon>
        <taxon>Pseudomonadati</taxon>
        <taxon>Pseudomonadota</taxon>
        <taxon>Gammaproteobacteria</taxon>
        <taxon>Pseudomonadales</taxon>
        <taxon>Pseudomonadaceae</taxon>
        <taxon>Pseudomonas</taxon>
    </lineage>
</organism>
<gene>
    <name evidence="1" type="primary">rpsN</name>
    <name type="ordered locus">PP_0467</name>
    <name type="ORF">PP0467</name>
</gene>
<proteinExistence type="inferred from homology"/>
<feature type="chain" id="PRO_1000128519" description="Small ribosomal subunit protein uS14">
    <location>
        <begin position="1"/>
        <end position="101"/>
    </location>
</feature>
<protein>
    <recommendedName>
        <fullName evidence="1">Small ribosomal subunit protein uS14</fullName>
    </recommendedName>
    <alternativeName>
        <fullName evidence="2">30S ribosomal protein S14</fullName>
    </alternativeName>
</protein>
<accession>Q88QM2</accession>
<comment type="function">
    <text evidence="1">Binds 16S rRNA, required for the assembly of 30S particles and may also be responsible for determining the conformation of the 16S rRNA at the A site.</text>
</comment>
<comment type="subunit">
    <text evidence="1">Part of the 30S ribosomal subunit. Contacts proteins S3 and S10.</text>
</comment>
<comment type="similarity">
    <text evidence="1">Belongs to the universal ribosomal protein uS14 family.</text>
</comment>